<accession>Q12181</accession>
<accession>D6W456</accession>
<reference key="1">
    <citation type="journal article" date="1997" name="Nature">
        <title>The nucleotide sequence of Saccharomyces cerevisiae chromosome XVI.</title>
        <authorList>
            <person name="Bussey H."/>
            <person name="Storms R.K."/>
            <person name="Ahmed A."/>
            <person name="Albermann K."/>
            <person name="Allen E."/>
            <person name="Ansorge W."/>
            <person name="Araujo R."/>
            <person name="Aparicio A."/>
            <person name="Barrell B.G."/>
            <person name="Badcock K."/>
            <person name="Benes V."/>
            <person name="Botstein D."/>
            <person name="Bowman S."/>
            <person name="Brueckner M."/>
            <person name="Carpenter J."/>
            <person name="Cherry J.M."/>
            <person name="Chung E."/>
            <person name="Churcher C.M."/>
            <person name="Coster F."/>
            <person name="Davis K."/>
            <person name="Davis R.W."/>
            <person name="Dietrich F.S."/>
            <person name="Delius H."/>
            <person name="DiPaolo T."/>
            <person name="Dubois E."/>
            <person name="Duesterhoeft A."/>
            <person name="Duncan M."/>
            <person name="Floeth M."/>
            <person name="Fortin N."/>
            <person name="Friesen J.D."/>
            <person name="Fritz C."/>
            <person name="Goffeau A."/>
            <person name="Hall J."/>
            <person name="Hebling U."/>
            <person name="Heumann K."/>
            <person name="Hilbert H."/>
            <person name="Hillier L.W."/>
            <person name="Hunicke-Smith S."/>
            <person name="Hyman R.W."/>
            <person name="Johnston M."/>
            <person name="Kalman S."/>
            <person name="Kleine K."/>
            <person name="Komp C."/>
            <person name="Kurdi O."/>
            <person name="Lashkari D."/>
            <person name="Lew H."/>
            <person name="Lin A."/>
            <person name="Lin D."/>
            <person name="Louis E.J."/>
            <person name="Marathe R."/>
            <person name="Messenguy F."/>
            <person name="Mewes H.-W."/>
            <person name="Mirtipati S."/>
            <person name="Moestl D."/>
            <person name="Mueller-Auer S."/>
            <person name="Namath A."/>
            <person name="Nentwich U."/>
            <person name="Oefner P."/>
            <person name="Pearson D."/>
            <person name="Petel F.X."/>
            <person name="Pohl T.M."/>
            <person name="Purnelle B."/>
            <person name="Rajandream M.A."/>
            <person name="Rechmann S."/>
            <person name="Rieger M."/>
            <person name="Riles L."/>
            <person name="Roberts D."/>
            <person name="Schaefer M."/>
            <person name="Scharfe M."/>
            <person name="Scherens B."/>
            <person name="Schramm S."/>
            <person name="Schroeder M."/>
            <person name="Sdicu A.-M."/>
            <person name="Tettelin H."/>
            <person name="Urrestarazu L.A."/>
            <person name="Ushinsky S."/>
            <person name="Vierendeels F."/>
            <person name="Vissers S."/>
            <person name="Voss H."/>
            <person name="Walsh S.V."/>
            <person name="Wambutt R."/>
            <person name="Wang Y."/>
            <person name="Wedler E."/>
            <person name="Wedler H."/>
            <person name="Winnett E."/>
            <person name="Zhong W.-W."/>
            <person name="Zollner A."/>
            <person name="Vo D.H."/>
            <person name="Hani J."/>
        </authorList>
    </citation>
    <scope>NUCLEOTIDE SEQUENCE [LARGE SCALE GENOMIC DNA]</scope>
    <source>
        <strain>ATCC 204508 / S288c</strain>
    </source>
</reference>
<reference key="2">
    <citation type="journal article" date="2014" name="G3 (Bethesda)">
        <title>The reference genome sequence of Saccharomyces cerevisiae: Then and now.</title>
        <authorList>
            <person name="Engel S.R."/>
            <person name="Dietrich F.S."/>
            <person name="Fisk D.G."/>
            <person name="Binkley G."/>
            <person name="Balakrishnan R."/>
            <person name="Costanzo M.C."/>
            <person name="Dwight S.S."/>
            <person name="Hitz B.C."/>
            <person name="Karra K."/>
            <person name="Nash R.S."/>
            <person name="Weng S."/>
            <person name="Wong E.D."/>
            <person name="Lloyd P."/>
            <person name="Skrzypek M.S."/>
            <person name="Miyasato S.R."/>
            <person name="Simison M."/>
            <person name="Cherry J.M."/>
        </authorList>
    </citation>
    <scope>GENOME REANNOTATION</scope>
    <source>
        <strain>ATCC 204508 / S288c</strain>
    </source>
</reference>
<reference key="3">
    <citation type="journal article" date="2003" name="Curr. Genet.">
        <title>Characterization of mutations that are synthetic lethal with pol3-13, a mutated allele of DNA polymerase delta in Saccharomyces cerevisiae.</title>
        <authorList>
            <person name="Chanet R."/>
            <person name="Heude M."/>
        </authorList>
    </citation>
    <scope>FUNCTION</scope>
</reference>
<reference key="4">
    <citation type="journal article" date="2009" name="PLoS ONE">
        <title>A newly identified essential complex, Dre2-Tah18, controls mitochondria integrity and cell death after oxidative stress in yeast.</title>
        <authorList>
            <person name="Vernis L."/>
            <person name="Facca C."/>
            <person name="Delagoutte E."/>
            <person name="Soler N."/>
            <person name="Chanet R."/>
            <person name="Guiard B."/>
            <person name="Faye G."/>
            <person name="Baldacci G."/>
        </authorList>
    </citation>
    <scope>FUNCTION IN APOPTOSIS</scope>
    <scope>INTERACTION WITH DRE2</scope>
    <scope>SUBCELLULAR LOCATION</scope>
</reference>
<reference key="5">
    <citation type="journal article" date="2010" name="Nat. Chem. Biol.">
        <title>Tah18 transfers electrons to Dre2 in cytosolic iron-sulfur protein biogenesis.</title>
        <authorList>
            <person name="Netz D.J."/>
            <person name="Stumpfig M."/>
            <person name="Dore C."/>
            <person name="Muhlenhoff U."/>
            <person name="Pierik A.J."/>
            <person name="Lill R."/>
        </authorList>
    </citation>
    <scope>FUNCTION</scope>
    <scope>COFACTOR</scope>
    <scope>CATALYTIC ACTIVITY</scope>
    <scope>BIOPHYSICOCHEMICAL PROPERTIES</scope>
    <scope>INTERACTION WITH DRE2</scope>
</reference>
<reference key="6">
    <citation type="journal article" date="2011" name="Mol. Microbiol.">
        <title>Interaction between the reductase Tah18 and highly conserved Fe-S containing Dre2 C-terminus is essential for yeast viability.</title>
        <authorList>
            <person name="Soler N."/>
            <person name="Delagoutte E."/>
            <person name="Miron S."/>
            <person name="Facca C."/>
            <person name="Baille D."/>
            <person name="d'Autreaux B."/>
            <person name="Craescu G."/>
            <person name="Frapart Y.M."/>
            <person name="Mansuy D."/>
            <person name="Baldacci G."/>
            <person name="Huang M.E."/>
            <person name="Vernis L."/>
        </authorList>
    </citation>
    <scope>FUNCTION</scope>
    <scope>INTERACTION WITH DRE2</scope>
</reference>
<keyword id="KW-0963">Cytoplasm</keyword>
<keyword id="KW-0274">FAD</keyword>
<keyword id="KW-0285">Flavoprotein</keyword>
<keyword id="KW-0288">FMN</keyword>
<keyword id="KW-0496">Mitochondrion</keyword>
<keyword id="KW-0521">NADP</keyword>
<keyword id="KW-0560">Oxidoreductase</keyword>
<keyword id="KW-1185">Reference proteome</keyword>
<feature type="chain" id="PRO_0000167624" description="NADPH-dependent diflavin oxidoreductase 1">
    <location>
        <begin position="1"/>
        <end position="623"/>
    </location>
</feature>
<feature type="domain" description="Flavodoxin-like" evidence="1">
    <location>
        <begin position="7"/>
        <end position="168"/>
    </location>
</feature>
<feature type="domain" description="FAD-binding FR-type" evidence="1">
    <location>
        <begin position="224"/>
        <end position="491"/>
    </location>
</feature>
<feature type="binding site" evidence="1">
    <location>
        <begin position="13"/>
        <end position="18"/>
    </location>
    <ligand>
        <name>FMN</name>
        <dbReference type="ChEBI" id="CHEBI:58210"/>
    </ligand>
</feature>
<feature type="binding site" evidence="1">
    <location>
        <begin position="60"/>
        <end position="63"/>
    </location>
    <ligand>
        <name>FMN</name>
        <dbReference type="ChEBI" id="CHEBI:58210"/>
    </ligand>
</feature>
<feature type="binding site" evidence="1">
    <location>
        <begin position="106"/>
        <end position="115"/>
    </location>
    <ligand>
        <name>FMN</name>
        <dbReference type="ChEBI" id="CHEBI:58210"/>
    </ligand>
</feature>
<feature type="binding site" evidence="1">
    <location>
        <position position="142"/>
    </location>
    <ligand>
        <name>FMN</name>
        <dbReference type="ChEBI" id="CHEBI:58210"/>
    </ligand>
</feature>
<feature type="binding site" evidence="1">
    <location>
        <position position="383"/>
    </location>
    <ligand>
        <name>FAD</name>
        <dbReference type="ChEBI" id="CHEBI:57692"/>
    </ligand>
</feature>
<feature type="binding site" evidence="1">
    <location>
        <begin position="413"/>
        <end position="416"/>
    </location>
    <ligand>
        <name>FAD</name>
        <dbReference type="ChEBI" id="CHEBI:57692"/>
    </ligand>
</feature>
<feature type="binding site" evidence="1">
    <location>
        <begin position="445"/>
        <end position="448"/>
    </location>
    <ligand>
        <name>FAD</name>
        <dbReference type="ChEBI" id="CHEBI:57692"/>
    </ligand>
</feature>
<feature type="binding site" evidence="1">
    <location>
        <begin position="538"/>
        <end position="539"/>
    </location>
    <ligand>
        <name>NADP(+)</name>
        <dbReference type="ChEBI" id="CHEBI:58349"/>
    </ligand>
</feature>
<feature type="binding site" evidence="1">
    <location>
        <position position="623"/>
    </location>
    <ligand>
        <name>FAD</name>
        <dbReference type="ChEBI" id="CHEBI:57692"/>
    </ligand>
</feature>
<name>NDOR1_YEAST</name>
<proteinExistence type="evidence at protein level"/>
<gene>
    <name evidence="1" type="primary">TAH18</name>
    <name type="ordered locus">YPR048W</name>
    <name type="ORF">YP9499.06</name>
</gene>
<comment type="function">
    <text evidence="1 2 3 4">NADPH-dependent reductase which is a central component of the cytosolic iron-sulfur (Fe-S) protein assembly (CIA) machinery (PubMed:20802492). Transfers electrons from NADPH via its FAD and FMN prosthetic groups to the [2Fe-2S] cluster of DRE2, another key component of the CIA machinery (PubMed:20802492, PubMed:21902732). In turn, this reduced cluster provides electrons for assembly of cytosolic iron-sulfur cluster proteins (PubMed:20802492). Positively controls H(2)O(2)-induced cell death (PubMed:19194512).</text>
</comment>
<comment type="catalytic activity">
    <reaction evidence="1 3">
        <text>2 oxidized [2Fe-2S]-[protein] + NADPH = 2 reduced [2Fe-2S]-[protein] + NADP(+) + H(+)</text>
        <dbReference type="Rhea" id="RHEA:67716"/>
        <dbReference type="Rhea" id="RHEA-COMP:17327"/>
        <dbReference type="Rhea" id="RHEA-COMP:17328"/>
        <dbReference type="ChEBI" id="CHEBI:15378"/>
        <dbReference type="ChEBI" id="CHEBI:33737"/>
        <dbReference type="ChEBI" id="CHEBI:33738"/>
        <dbReference type="ChEBI" id="CHEBI:57783"/>
        <dbReference type="ChEBI" id="CHEBI:58349"/>
    </reaction>
    <physiologicalReaction direction="left-to-right" evidence="1 5">
        <dbReference type="Rhea" id="RHEA:67717"/>
    </physiologicalReaction>
</comment>
<comment type="cofactor">
    <cofactor evidence="1 3">
        <name>FAD</name>
        <dbReference type="ChEBI" id="CHEBI:57692"/>
    </cofactor>
</comment>
<comment type="cofactor">
    <cofactor evidence="1 3">
        <name>FMN</name>
        <dbReference type="ChEBI" id="CHEBI:58210"/>
    </cofactor>
</comment>
<comment type="biophysicochemical properties">
    <kinetics>
        <KM evidence="3">26 uM for NADPH</KM>
        <KM evidence="3">12 uM for cytochrome c</KM>
        <Vmax evidence="3">0.11 umol/min/mg enzyme</Vmax>
        <text evidence="3">kcat is 0.14 sec(-1) for cytochrome c reduction.</text>
    </kinetics>
</comment>
<comment type="subunit">
    <text evidence="1 2 4">Interacts with DRE2; as part of the cytosolic iron-sulfur (Fe-S) protein assembly (CIA) machinery.</text>
</comment>
<comment type="interaction">
    <interactant intactId="EBI-37624">
        <id>Q12181</id>
    </interactant>
    <interactant intactId="EBI-26482">
        <id>P36152</id>
        <label>DRE2</label>
    </interactant>
    <organismsDiffer>false</organismsDiffer>
    <experiments>5</experiments>
</comment>
<comment type="subcellular location">
    <subcellularLocation>
        <location evidence="1 2">Cytoplasm</location>
    </subcellularLocation>
    <subcellularLocation>
        <location evidence="1 2">Mitochondrion</location>
    </subcellularLocation>
    <text evidence="1 2">Relocalizes to mitochondria after H(2)O(2) exposure.</text>
</comment>
<comment type="similarity">
    <text evidence="1">Belongs to the NADPH-dependent diflavin oxidoreductase NDOR1 family.</text>
</comment>
<comment type="similarity">
    <text evidence="1">In the N-terminal section; belongs to the flavodoxin family.</text>
</comment>
<comment type="similarity">
    <text evidence="1">In the C-terminal section; belongs to the flavoprotein pyridine nucleotide cytochrome reductase family.</text>
</comment>
<organism>
    <name type="scientific">Saccharomyces cerevisiae (strain ATCC 204508 / S288c)</name>
    <name type="common">Baker's yeast</name>
    <dbReference type="NCBI Taxonomy" id="559292"/>
    <lineage>
        <taxon>Eukaryota</taxon>
        <taxon>Fungi</taxon>
        <taxon>Dikarya</taxon>
        <taxon>Ascomycota</taxon>
        <taxon>Saccharomycotina</taxon>
        <taxon>Saccharomycetes</taxon>
        <taxon>Saccharomycetales</taxon>
        <taxon>Saccharomycetaceae</taxon>
        <taxon>Saccharomyces</taxon>
    </lineage>
</organism>
<dbReference type="EC" id="1.18.1.-" evidence="1 3"/>
<dbReference type="EMBL" id="Z71255">
    <property type="protein sequence ID" value="CAA94995.1"/>
    <property type="molecule type" value="Genomic_DNA"/>
</dbReference>
<dbReference type="EMBL" id="Z49219">
    <property type="protein sequence ID" value="CAA89168.1"/>
    <property type="molecule type" value="Genomic_DNA"/>
</dbReference>
<dbReference type="EMBL" id="BK006949">
    <property type="protein sequence ID" value="DAA11472.1"/>
    <property type="molecule type" value="Genomic_DNA"/>
</dbReference>
<dbReference type="PIR" id="S54072">
    <property type="entry name" value="S54072"/>
</dbReference>
<dbReference type="RefSeq" id="NP_015373.1">
    <property type="nucleotide sequence ID" value="NM_001184145.1"/>
</dbReference>
<dbReference type="SMR" id="Q12181"/>
<dbReference type="BioGRID" id="36224">
    <property type="interactions" value="151"/>
</dbReference>
<dbReference type="ComplexPortal" id="CPX-386">
    <property type="entry name" value="TAH18-DRE2 complex"/>
</dbReference>
<dbReference type="DIP" id="DIP-1688N"/>
<dbReference type="FunCoup" id="Q12181">
    <property type="interactions" value="866"/>
</dbReference>
<dbReference type="IntAct" id="Q12181">
    <property type="interactions" value="7"/>
</dbReference>
<dbReference type="MINT" id="Q12181"/>
<dbReference type="STRING" id="4932.YPR048W"/>
<dbReference type="iPTMnet" id="Q12181"/>
<dbReference type="PaxDb" id="4932-YPR048W"/>
<dbReference type="PeptideAtlas" id="Q12181"/>
<dbReference type="EnsemblFungi" id="YPR048W_mRNA">
    <property type="protein sequence ID" value="YPR048W"/>
    <property type="gene ID" value="YPR048W"/>
</dbReference>
<dbReference type="GeneID" id="856161"/>
<dbReference type="KEGG" id="sce:YPR048W"/>
<dbReference type="AGR" id="SGD:S000006252"/>
<dbReference type="SGD" id="S000006252">
    <property type="gene designation" value="TAH18"/>
</dbReference>
<dbReference type="VEuPathDB" id="FungiDB:YPR048W"/>
<dbReference type="eggNOG" id="KOG1159">
    <property type="taxonomic scope" value="Eukaryota"/>
</dbReference>
<dbReference type="GeneTree" id="ENSGT00930000151050"/>
<dbReference type="HOGENOM" id="CLU_001570_17_6_1"/>
<dbReference type="InParanoid" id="Q12181"/>
<dbReference type="OMA" id="DIMSIPR"/>
<dbReference type="OrthoDB" id="1856718at2759"/>
<dbReference type="BioCyc" id="YEAST:G3O-34203-MONOMER"/>
<dbReference type="BioGRID-ORCS" id="856161">
    <property type="hits" value="7 hits in 10 CRISPR screens"/>
</dbReference>
<dbReference type="PRO" id="PR:Q12181"/>
<dbReference type="Proteomes" id="UP000002311">
    <property type="component" value="Chromosome XVI"/>
</dbReference>
<dbReference type="RNAct" id="Q12181">
    <property type="molecule type" value="protein"/>
</dbReference>
<dbReference type="GO" id="GO:0005829">
    <property type="term" value="C:cytosol"/>
    <property type="evidence" value="ECO:0000314"/>
    <property type="project" value="ComplexPortal"/>
</dbReference>
<dbReference type="GO" id="GO:0097361">
    <property type="term" value="C:cytosolic [4Fe-4S] assembly targeting complex"/>
    <property type="evidence" value="ECO:0000314"/>
    <property type="project" value="ComplexPortal"/>
</dbReference>
<dbReference type="GO" id="GO:0005739">
    <property type="term" value="C:mitochondrion"/>
    <property type="evidence" value="ECO:0000314"/>
    <property type="project" value="SGD"/>
</dbReference>
<dbReference type="GO" id="GO:0050660">
    <property type="term" value="F:flavin adenine dinucleotide binding"/>
    <property type="evidence" value="ECO:0000318"/>
    <property type="project" value="GO_Central"/>
</dbReference>
<dbReference type="GO" id="GO:0010181">
    <property type="term" value="F:FMN binding"/>
    <property type="evidence" value="ECO:0000318"/>
    <property type="project" value="GO_Central"/>
</dbReference>
<dbReference type="GO" id="GO:0050661">
    <property type="term" value="F:NADP binding"/>
    <property type="evidence" value="ECO:0007669"/>
    <property type="project" value="UniProtKB-UniRule"/>
</dbReference>
<dbReference type="GO" id="GO:0003958">
    <property type="term" value="F:NADPH-hemoprotein reductase activity"/>
    <property type="evidence" value="ECO:0007669"/>
    <property type="project" value="InterPro"/>
</dbReference>
<dbReference type="GO" id="GO:0016491">
    <property type="term" value="F:oxidoreductase activity"/>
    <property type="evidence" value="ECO:0000318"/>
    <property type="project" value="GO_Central"/>
</dbReference>
<dbReference type="GO" id="GO:0016651">
    <property type="term" value="F:oxidoreductase activity, acting on NAD(P)H"/>
    <property type="evidence" value="ECO:0000314"/>
    <property type="project" value="SGD"/>
</dbReference>
<dbReference type="GO" id="GO:0034599">
    <property type="term" value="P:cellular response to oxidative stress"/>
    <property type="evidence" value="ECO:0000314"/>
    <property type="project" value="ComplexPortal"/>
</dbReference>
<dbReference type="GO" id="GO:0016226">
    <property type="term" value="P:iron-sulfur cluster assembly"/>
    <property type="evidence" value="ECO:0000314"/>
    <property type="project" value="ComplexPortal"/>
</dbReference>
<dbReference type="GO" id="GO:0006809">
    <property type="term" value="P:nitric oxide biosynthetic process"/>
    <property type="evidence" value="ECO:0000315"/>
    <property type="project" value="SGD"/>
</dbReference>
<dbReference type="GO" id="GO:0045429">
    <property type="term" value="P:positive regulation of nitric oxide biosynthetic process"/>
    <property type="evidence" value="ECO:0000315"/>
    <property type="project" value="SGD"/>
</dbReference>
<dbReference type="FunFam" id="1.20.990.10:FF:000008">
    <property type="entry name" value="NADPH-dependent diflavin oxidoreductase 1"/>
    <property type="match status" value="1"/>
</dbReference>
<dbReference type="FunFam" id="3.40.50.360:FF:000056">
    <property type="entry name" value="NADPH-dependent diflavin oxidoreductase 1"/>
    <property type="match status" value="1"/>
</dbReference>
<dbReference type="FunFam" id="3.40.50.80:FF:000030">
    <property type="entry name" value="NADPH-dependent diflavin oxidoreductase 1"/>
    <property type="match status" value="1"/>
</dbReference>
<dbReference type="Gene3D" id="3.40.50.360">
    <property type="match status" value="1"/>
</dbReference>
<dbReference type="Gene3D" id="1.20.990.10">
    <property type="entry name" value="NADPH-cytochrome p450 Reductase, Chain A, domain 3"/>
    <property type="match status" value="1"/>
</dbReference>
<dbReference type="Gene3D" id="3.40.50.80">
    <property type="entry name" value="Nucleotide-binding domain of ferredoxin-NADP reductase (FNR) module"/>
    <property type="match status" value="1"/>
</dbReference>
<dbReference type="Gene3D" id="2.40.30.10">
    <property type="entry name" value="Translation factors"/>
    <property type="match status" value="1"/>
</dbReference>
<dbReference type="HAMAP" id="MF_03178">
    <property type="entry name" value="NDOR1"/>
    <property type="match status" value="1"/>
</dbReference>
<dbReference type="InterPro" id="IPR003097">
    <property type="entry name" value="CysJ-like_FAD-binding"/>
</dbReference>
<dbReference type="InterPro" id="IPR017927">
    <property type="entry name" value="FAD-bd_FR_type"/>
</dbReference>
<dbReference type="InterPro" id="IPR001094">
    <property type="entry name" value="Flavdoxin-like"/>
</dbReference>
<dbReference type="InterPro" id="IPR008254">
    <property type="entry name" value="Flavodoxin/NO_synth"/>
</dbReference>
<dbReference type="InterPro" id="IPR001709">
    <property type="entry name" value="Flavoprot_Pyr_Nucl_cyt_Rdtase"/>
</dbReference>
<dbReference type="InterPro" id="IPR029039">
    <property type="entry name" value="Flavoprotein-like_sf"/>
</dbReference>
<dbReference type="InterPro" id="IPR039261">
    <property type="entry name" value="FNR_nucleotide-bd"/>
</dbReference>
<dbReference type="InterPro" id="IPR023173">
    <property type="entry name" value="NADPH_Cyt_P450_Rdtase_alpha"/>
</dbReference>
<dbReference type="InterPro" id="IPR028879">
    <property type="entry name" value="NDOR1"/>
</dbReference>
<dbReference type="InterPro" id="IPR001433">
    <property type="entry name" value="OxRdtase_FAD/NAD-bd"/>
</dbReference>
<dbReference type="InterPro" id="IPR017938">
    <property type="entry name" value="Riboflavin_synthase-like_b-brl"/>
</dbReference>
<dbReference type="PANTHER" id="PTHR19384:SF10">
    <property type="entry name" value="NADPH-DEPENDENT DIFLAVIN OXIDOREDUCTASE 1"/>
    <property type="match status" value="1"/>
</dbReference>
<dbReference type="PANTHER" id="PTHR19384">
    <property type="entry name" value="NITRIC OXIDE SYNTHASE-RELATED"/>
    <property type="match status" value="1"/>
</dbReference>
<dbReference type="Pfam" id="PF00667">
    <property type="entry name" value="FAD_binding_1"/>
    <property type="match status" value="1"/>
</dbReference>
<dbReference type="Pfam" id="PF00258">
    <property type="entry name" value="Flavodoxin_1"/>
    <property type="match status" value="1"/>
</dbReference>
<dbReference type="Pfam" id="PF00175">
    <property type="entry name" value="NAD_binding_1"/>
    <property type="match status" value="1"/>
</dbReference>
<dbReference type="PRINTS" id="PR00369">
    <property type="entry name" value="FLAVODOXIN"/>
</dbReference>
<dbReference type="PRINTS" id="PR00371">
    <property type="entry name" value="FPNCR"/>
</dbReference>
<dbReference type="SUPFAM" id="SSF52343">
    <property type="entry name" value="Ferredoxin reductase-like, C-terminal NADP-linked domain"/>
    <property type="match status" value="1"/>
</dbReference>
<dbReference type="SUPFAM" id="SSF52218">
    <property type="entry name" value="Flavoproteins"/>
    <property type="match status" value="1"/>
</dbReference>
<dbReference type="SUPFAM" id="SSF63380">
    <property type="entry name" value="Riboflavin synthase domain-like"/>
    <property type="match status" value="1"/>
</dbReference>
<dbReference type="PROSITE" id="PS51384">
    <property type="entry name" value="FAD_FR"/>
    <property type="match status" value="1"/>
</dbReference>
<dbReference type="PROSITE" id="PS50902">
    <property type="entry name" value="FLAVODOXIN_LIKE"/>
    <property type="match status" value="1"/>
</dbReference>
<protein>
    <recommendedName>
        <fullName evidence="1">NADPH-dependent diflavin oxidoreductase 1</fullName>
        <ecNumber evidence="1 3">1.18.1.-</ecNumber>
    </recommendedName>
    <alternativeName>
        <fullName evidence="1">NADPH-dependent FMN and FAD-containing oxidoreductase</fullName>
    </alternativeName>
</protein>
<sequence length="623" mass="72328">MSSSKKIVILYGSETGNAHDFATILSHRLHRWHFSHTFCSIGDYDPQDILKCRYLFIICSTTGQGELPRNVNALKGERPVTFWSFLKRKNLPSNLLNHIQTAMLGLGDSSYPKFNYGIRKLHQRIVTQLGANELFDRLEADDQAMAGSNKGTGLGIESVYFEYEKKVLSFLLSKYPNRKVNGQIIKREELDPEVYLEPASYLQLSDEHANEKFTSTKVIFEGDESLKVGRVNINKRITSEGHFQDVRQFKFSNVDKIQENYEPGDTVTIYPCNTDEDVSRFLANQSHWLEIADKPLNFTSGVPNDLKDGGLVRPMTLRNLLKYHCDFMSIPRTSFFLKIWTFATDVTKMERGQEQLNDQREKLRQFATDQDMQDLYDYCNRPRRSILEVLEDFISVKLPWKYVLDYLPIIKPRYYSISSGPGDPNIELTVAIVKYKTILRKIRRGICTNYIARLQEGEQIRYKLQNNHIIKKEFLNKPMILVGPGVGLAPLLSVVKAEISKDIKLLFGCRYKDKDYIYKDMLEDWFRKGKIALHSSFSRDEENSPGVKYVQDYLWRLGEEITNLVVNKDAVFFLCGSSGKMPIQVRLTFIEMLKKWGNFSDEETAKKYLKEMEKSDRYIQETW</sequence>
<evidence type="ECO:0000255" key="1">
    <source>
        <dbReference type="HAMAP-Rule" id="MF_03178"/>
    </source>
</evidence>
<evidence type="ECO:0000269" key="2">
    <source>
    </source>
</evidence>
<evidence type="ECO:0000269" key="3">
    <source>
    </source>
</evidence>
<evidence type="ECO:0000269" key="4">
    <source>
    </source>
</evidence>
<evidence type="ECO:0000305" key="5">
    <source>
    </source>
</evidence>